<gene>
    <name type="primary">php4</name>
    <name type="ORF">SPBC16E9.01c</name>
    <name type="ORF">SPBP16F5.09c</name>
</gene>
<dbReference type="EMBL" id="CU329671">
    <property type="protein sequence ID" value="CAC08548.2"/>
    <property type="molecule type" value="Genomic_DNA"/>
</dbReference>
<dbReference type="RefSeq" id="NP_595783.2">
    <property type="nucleotide sequence ID" value="NM_001021683.3"/>
</dbReference>
<dbReference type="SMR" id="O14318"/>
<dbReference type="BioGRID" id="276199">
    <property type="interactions" value="7"/>
</dbReference>
<dbReference type="FunCoup" id="O14318">
    <property type="interactions" value="1"/>
</dbReference>
<dbReference type="IntAct" id="O14318">
    <property type="interactions" value="1"/>
</dbReference>
<dbReference type="STRING" id="284812.O14318"/>
<dbReference type="iPTMnet" id="O14318"/>
<dbReference type="PaxDb" id="4896-SPBC16E9.01c.1"/>
<dbReference type="EnsemblFungi" id="SPBC16E9.01c.1">
    <property type="protein sequence ID" value="SPBC16E9.01c.1:pep"/>
    <property type="gene ID" value="SPBC16E9.01c"/>
</dbReference>
<dbReference type="GeneID" id="2539644"/>
<dbReference type="KEGG" id="spo:2539644"/>
<dbReference type="PomBase" id="SPBC16E9.01c">
    <property type="gene designation" value="php4"/>
</dbReference>
<dbReference type="VEuPathDB" id="FungiDB:SPBC16E9.01c"/>
<dbReference type="HOGENOM" id="CLU_921838_0_0_1"/>
<dbReference type="InParanoid" id="O14318"/>
<dbReference type="OMA" id="KQWVVPP"/>
<dbReference type="PRO" id="PR:O14318"/>
<dbReference type="Proteomes" id="UP000002485">
    <property type="component" value="Chromosome II"/>
</dbReference>
<dbReference type="GO" id="GO:0016602">
    <property type="term" value="C:CCAAT-binding factor complex"/>
    <property type="evidence" value="ECO:0000269"/>
    <property type="project" value="PomBase"/>
</dbReference>
<dbReference type="GO" id="GO:0005737">
    <property type="term" value="C:cytoplasm"/>
    <property type="evidence" value="ECO:0000314"/>
    <property type="project" value="PomBase"/>
</dbReference>
<dbReference type="GO" id="GO:0005829">
    <property type="term" value="C:cytosol"/>
    <property type="evidence" value="ECO:0000314"/>
    <property type="project" value="PomBase"/>
</dbReference>
<dbReference type="GO" id="GO:0072686">
    <property type="term" value="C:mitotic spindle"/>
    <property type="evidence" value="ECO:0007005"/>
    <property type="project" value="PomBase"/>
</dbReference>
<dbReference type="GO" id="GO:0005634">
    <property type="term" value="C:nucleus"/>
    <property type="evidence" value="ECO:0000314"/>
    <property type="project" value="PomBase"/>
</dbReference>
<dbReference type="GO" id="GO:0000922">
    <property type="term" value="C:spindle pole"/>
    <property type="evidence" value="ECO:0007669"/>
    <property type="project" value="UniProtKB-SubCell"/>
</dbReference>
<dbReference type="GO" id="GO:0003714">
    <property type="term" value="F:transcription corepressor activity"/>
    <property type="evidence" value="ECO:0000315"/>
    <property type="project" value="PomBase"/>
</dbReference>
<dbReference type="GO" id="GO:0006879">
    <property type="term" value="P:intracellular iron ion homeostasis"/>
    <property type="evidence" value="ECO:0000315"/>
    <property type="project" value="PomBase"/>
</dbReference>
<dbReference type="GO" id="GO:0000122">
    <property type="term" value="P:negative regulation of transcription by RNA polymerase II"/>
    <property type="evidence" value="ECO:0000315"/>
    <property type="project" value="PomBase"/>
</dbReference>
<dbReference type="InterPro" id="IPR018287">
    <property type="entry name" value="Hap4_TF_heteromerisation"/>
</dbReference>
<dbReference type="Pfam" id="PF10297">
    <property type="entry name" value="Hap4_Hap_bind"/>
    <property type="match status" value="1"/>
</dbReference>
<name>PHP4_SCHPO</name>
<proteinExistence type="evidence at protein level"/>
<evidence type="ECO:0000250" key="1"/>
<evidence type="ECO:0000255" key="2"/>
<evidence type="ECO:0000256" key="3">
    <source>
        <dbReference type="SAM" id="MobiDB-lite"/>
    </source>
</evidence>
<evidence type="ECO:0000269" key="4">
    <source>
    </source>
</evidence>
<evidence type="ECO:0000269" key="5">
    <source>
    </source>
</evidence>
<evidence type="ECO:0000269" key="6">
    <source>
    </source>
</evidence>
<evidence type="ECO:0000269" key="7">
    <source>
    </source>
</evidence>
<protein>
    <recommendedName>
        <fullName>CCAAT-binding factor complex subunit php4</fullName>
    </recommendedName>
</protein>
<sequence>MESSKSPSEVEKSSSASPAPQKPMIRVSKQWVVPPRPKPGRKPALDALGRRKAPIKPRPGPTSALSVEEAKFRVREKQYQDTIGKLQKENNELLEQLEMLQAQLKNSTLDSPKEVEVNSEVVKPDSATTENENRYVNQYNYPVEPPCAKNAVYTEIPIELDPHAFLGDSAKRIRVDSDSKDAKSVPSENGRIRVSMSPQNEINFTPENPAVMEKIRKRGVCNSVEGCLYSGSPKSVKRVRESEETKVYAQLLIDLHKSSKSAPMLKAGPSIAFKLPTMEPNFNDVRPVTSISSSS</sequence>
<keyword id="KW-0175">Coiled coil</keyword>
<keyword id="KW-0963">Cytoplasm</keyword>
<keyword id="KW-0206">Cytoskeleton</keyword>
<keyword id="KW-0539">Nucleus</keyword>
<keyword id="KW-1185">Reference proteome</keyword>
<keyword id="KW-0804">Transcription</keyword>
<keyword id="KW-0805">Transcription regulation</keyword>
<comment type="function">
    <text evidence="5 6 7">Component of the transcription regulatory CCAAT-binding complex. Required for the reprogramming of the cell for iron use. Down-regulates pcl1, sdh4, and isa1 underlow-iron conditions.</text>
</comment>
<comment type="subunit">
    <text evidence="1 7">Component of tha CCAAT-binding complex composed of at least php2, php3, php4 and php5 (By similarity). Interacts with crm1 and grx4.</text>
</comment>
<comment type="subcellular location">
    <subcellularLocation>
        <location evidence="7">Cytoplasm</location>
    </subcellularLocation>
    <subcellularLocation>
        <location evidence="4 7">Nucleus</location>
    </subcellularLocation>
    <subcellularLocation>
        <location>Cytoplasm</location>
        <location>Cytoskeleton</location>
        <location>Spindle pole</location>
    </subcellularLocation>
    <text evidence="7">Iron starvation induces nuclear accumulation and iron induces relocalization to the cytoplasm, in association with exportin crm1.</text>
</comment>
<comment type="induction">
    <text evidence="5 6 7">Expressed is under the control of the iton-regulatory transcription factor fep1. Expression is repressed under iron-replete conditions and induced under conditions of iron starvation.</text>
</comment>
<feature type="chain" id="PRO_0000116506" description="CCAAT-binding factor complex subunit php4">
    <location>
        <begin position="1"/>
        <end position="295"/>
    </location>
</feature>
<feature type="region of interest" description="Disordered" evidence="3">
    <location>
        <begin position="1"/>
        <end position="69"/>
    </location>
</feature>
<feature type="region of interest" description="Disordered" evidence="3">
    <location>
        <begin position="108"/>
        <end position="130"/>
    </location>
</feature>
<feature type="coiled-coil region" evidence="2">
    <location>
        <begin position="73"/>
        <end position="111"/>
    </location>
</feature>
<feature type="short sequence motif" description="Nuclear export signal">
    <location>
        <begin position="93"/>
        <end position="100"/>
    </location>
</feature>
<feature type="compositionally biased region" description="Low complexity" evidence="3">
    <location>
        <begin position="1"/>
        <end position="19"/>
    </location>
</feature>
<accession>O14318</accession>
<accession>Q9HFE3</accession>
<reference key="1">
    <citation type="journal article" date="2002" name="Nature">
        <title>The genome sequence of Schizosaccharomyces pombe.</title>
        <authorList>
            <person name="Wood V."/>
            <person name="Gwilliam R."/>
            <person name="Rajandream M.A."/>
            <person name="Lyne M.H."/>
            <person name="Lyne R."/>
            <person name="Stewart A."/>
            <person name="Sgouros J.G."/>
            <person name="Peat N."/>
            <person name="Hayles J."/>
            <person name="Baker S.G."/>
            <person name="Basham D."/>
            <person name="Bowman S."/>
            <person name="Brooks K."/>
            <person name="Brown D."/>
            <person name="Brown S."/>
            <person name="Chillingworth T."/>
            <person name="Churcher C.M."/>
            <person name="Collins M."/>
            <person name="Connor R."/>
            <person name="Cronin A."/>
            <person name="Davis P."/>
            <person name="Feltwell T."/>
            <person name="Fraser A."/>
            <person name="Gentles S."/>
            <person name="Goble A."/>
            <person name="Hamlin N."/>
            <person name="Harris D.E."/>
            <person name="Hidalgo J."/>
            <person name="Hodgson G."/>
            <person name="Holroyd S."/>
            <person name="Hornsby T."/>
            <person name="Howarth S."/>
            <person name="Huckle E.J."/>
            <person name="Hunt S."/>
            <person name="Jagels K."/>
            <person name="James K.D."/>
            <person name="Jones L."/>
            <person name="Jones M."/>
            <person name="Leather S."/>
            <person name="McDonald S."/>
            <person name="McLean J."/>
            <person name="Mooney P."/>
            <person name="Moule S."/>
            <person name="Mungall K.L."/>
            <person name="Murphy L.D."/>
            <person name="Niblett D."/>
            <person name="Odell C."/>
            <person name="Oliver K."/>
            <person name="O'Neil S."/>
            <person name="Pearson D."/>
            <person name="Quail M.A."/>
            <person name="Rabbinowitsch E."/>
            <person name="Rutherford K.M."/>
            <person name="Rutter S."/>
            <person name="Saunders D."/>
            <person name="Seeger K."/>
            <person name="Sharp S."/>
            <person name="Skelton J."/>
            <person name="Simmonds M.N."/>
            <person name="Squares R."/>
            <person name="Squares S."/>
            <person name="Stevens K."/>
            <person name="Taylor K."/>
            <person name="Taylor R.G."/>
            <person name="Tivey A."/>
            <person name="Walsh S.V."/>
            <person name="Warren T."/>
            <person name="Whitehead S."/>
            <person name="Woodward J.R."/>
            <person name="Volckaert G."/>
            <person name="Aert R."/>
            <person name="Robben J."/>
            <person name="Grymonprez B."/>
            <person name="Weltjens I."/>
            <person name="Vanstreels E."/>
            <person name="Rieger M."/>
            <person name="Schaefer M."/>
            <person name="Mueller-Auer S."/>
            <person name="Gabel C."/>
            <person name="Fuchs M."/>
            <person name="Duesterhoeft A."/>
            <person name="Fritzc C."/>
            <person name="Holzer E."/>
            <person name="Moestl D."/>
            <person name="Hilbert H."/>
            <person name="Borzym K."/>
            <person name="Langer I."/>
            <person name="Beck A."/>
            <person name="Lehrach H."/>
            <person name="Reinhardt R."/>
            <person name="Pohl T.M."/>
            <person name="Eger P."/>
            <person name="Zimmermann W."/>
            <person name="Wedler H."/>
            <person name="Wambutt R."/>
            <person name="Purnelle B."/>
            <person name="Goffeau A."/>
            <person name="Cadieu E."/>
            <person name="Dreano S."/>
            <person name="Gloux S."/>
            <person name="Lelaure V."/>
            <person name="Mottier S."/>
            <person name="Galibert F."/>
            <person name="Aves S.J."/>
            <person name="Xiang Z."/>
            <person name="Hunt C."/>
            <person name="Moore K."/>
            <person name="Hurst S.M."/>
            <person name="Lucas M."/>
            <person name="Rochet M."/>
            <person name="Gaillardin C."/>
            <person name="Tallada V.A."/>
            <person name="Garzon A."/>
            <person name="Thode G."/>
            <person name="Daga R.R."/>
            <person name="Cruzado L."/>
            <person name="Jimenez J."/>
            <person name="Sanchez M."/>
            <person name="del Rey F."/>
            <person name="Benito J."/>
            <person name="Dominguez A."/>
            <person name="Revuelta J.L."/>
            <person name="Moreno S."/>
            <person name="Armstrong J."/>
            <person name="Forsburg S.L."/>
            <person name="Cerutti L."/>
            <person name="Lowe T."/>
            <person name="McCombie W.R."/>
            <person name="Paulsen I."/>
            <person name="Potashkin J."/>
            <person name="Shpakovski G.V."/>
            <person name="Ussery D."/>
            <person name="Barrell B.G."/>
            <person name="Nurse P."/>
        </authorList>
    </citation>
    <scope>NUCLEOTIDE SEQUENCE [LARGE SCALE GENOMIC DNA]</scope>
    <source>
        <strain>972 / ATCC 24843</strain>
    </source>
</reference>
<reference key="2">
    <citation type="journal article" date="2006" name="Eukaryot. Cell">
        <title>A transcription factor cascade involving Fep1 and the CCAAT-binding factor Php4 regulates gene expression in response to iron deficiency in the fission yeast Schizosaccharomyces pombe.</title>
        <authorList>
            <person name="Mercier A."/>
            <person name="Pelletier B."/>
            <person name="Labbe S."/>
        </authorList>
    </citation>
    <scope>FUNCTION</scope>
    <scope>INDUCTION</scope>
</reference>
<reference key="3">
    <citation type="journal article" date="2006" name="Nat. Biotechnol.">
        <title>ORFeome cloning and global analysis of protein localization in the fission yeast Schizosaccharomyces pombe.</title>
        <authorList>
            <person name="Matsuyama A."/>
            <person name="Arai R."/>
            <person name="Yashiroda Y."/>
            <person name="Shirai A."/>
            <person name="Kamata A."/>
            <person name="Sekido S."/>
            <person name="Kobayashi Y."/>
            <person name="Hashimoto A."/>
            <person name="Hamamoto M."/>
            <person name="Hiraoka Y."/>
            <person name="Horinouchi S."/>
            <person name="Yoshida M."/>
        </authorList>
    </citation>
    <scope>SUBCELLULAR LOCATION [LARGE SCALE ANALYSIS]</scope>
</reference>
<reference key="4">
    <citation type="journal article" date="2008" name="Eukaryot. Cell">
        <title>Key function for the CCAAT-binding factor Php4 to regulate gene expression in response to iron deficiency in fission yeast.</title>
        <authorList>
            <person name="Mercier A."/>
            <person name="Watt S."/>
            <person name="Bahler J."/>
            <person name="Labbe S."/>
        </authorList>
    </citation>
    <scope>FUNCTION</scope>
    <scope>INDUCTION</scope>
</reference>
<reference key="5">
    <citation type="journal article" date="2009" name="J. Biol. Chem.">
        <title>Both Php4 function and subcellular localization are regulated by iron via a multistep mechanism involving the glutaredoxin Grx4 and the exportin Crm1.</title>
        <authorList>
            <person name="Mercier A."/>
            <person name="Labbe S."/>
        </authorList>
    </citation>
    <scope>INDUCTION</scope>
    <scope>FUNCTION</scope>
    <scope>SUBCELLULAR LOCATION</scope>
    <scope>DOMAIN</scope>
    <scope>INTERACTION WITH CRM1 AND GRX4</scope>
</reference>
<organism>
    <name type="scientific">Schizosaccharomyces pombe (strain 972 / ATCC 24843)</name>
    <name type="common">Fission yeast</name>
    <dbReference type="NCBI Taxonomy" id="284812"/>
    <lineage>
        <taxon>Eukaryota</taxon>
        <taxon>Fungi</taxon>
        <taxon>Dikarya</taxon>
        <taxon>Ascomycota</taxon>
        <taxon>Taphrinomycotina</taxon>
        <taxon>Schizosaccharomycetes</taxon>
        <taxon>Schizosaccharomycetales</taxon>
        <taxon>Schizosaccharomycetaceae</taxon>
        <taxon>Schizosaccharomyces</taxon>
    </lineage>
</organism>